<reference evidence="8" key="1">
    <citation type="journal article" date="2010" name="J. Proteome Res.">
        <title>Extensive de novo sequencing of new parvalbumin isoforms using a novel combination of bottom-up proteomics, accurate molecular mass measurement by FTICR-MS, and selected MS/MS ion monitoring.</title>
        <authorList>
            <person name="Carrera M."/>
            <person name="Canas B."/>
            <person name="Vazquez J."/>
            <person name="Gallardo J.M."/>
        </authorList>
    </citation>
    <scope>PROTEIN SEQUENCE</scope>
    <source>
        <tissue evidence="6">Muscle</tissue>
    </source>
</reference>
<keyword id="KW-0020">Allergen</keyword>
<keyword id="KW-0106">Calcium</keyword>
<keyword id="KW-0903">Direct protein sequencing</keyword>
<keyword id="KW-0479">Metal-binding</keyword>
<keyword id="KW-0514">Muscle protein</keyword>
<keyword id="KW-0677">Repeat</keyword>
<organism>
    <name type="scientific">Macruronus magellanicus</name>
    <name type="common">Patagonian grenadier</name>
    <name type="synonym">Macruronus novaezelandiae magellanicus</name>
    <dbReference type="NCBI Taxonomy" id="92050"/>
    <lineage>
        <taxon>Eukaryota</taxon>
        <taxon>Metazoa</taxon>
        <taxon>Chordata</taxon>
        <taxon>Craniata</taxon>
        <taxon>Vertebrata</taxon>
        <taxon>Euteleostomi</taxon>
        <taxon>Actinopterygii</taxon>
        <taxon>Neopterygii</taxon>
        <taxon>Teleostei</taxon>
        <taxon>Neoteleostei</taxon>
        <taxon>Acanthomorphata</taxon>
        <taxon>Zeiogadaria</taxon>
        <taxon>Gadariae</taxon>
        <taxon>Gadiformes</taxon>
        <taxon>Gadoidei</taxon>
        <taxon>Merlucciidae</taxon>
        <taxon>Macruronus</taxon>
    </lineage>
</organism>
<comment type="function">
    <text evidence="2 3">In muscle, parvalbumin is thought to be involved in relaxation after contraction. It binds two calcium ions (By similarity).</text>
</comment>
<comment type="miscellaneous">
    <text evidence="2 6">Is regarded as an important allergen.</text>
</comment>
<comment type="similarity">
    <text evidence="4">Belongs to the parvalbumin family.</text>
</comment>
<protein>
    <recommendedName>
        <fullName evidence="7">Parvalbumin beta 3</fullName>
    </recommendedName>
</protein>
<dbReference type="SMR" id="P86740"/>
<dbReference type="GO" id="GO:0005737">
    <property type="term" value="C:cytoplasm"/>
    <property type="evidence" value="ECO:0007669"/>
    <property type="project" value="TreeGrafter"/>
</dbReference>
<dbReference type="GO" id="GO:0005509">
    <property type="term" value="F:calcium ion binding"/>
    <property type="evidence" value="ECO:0007669"/>
    <property type="project" value="InterPro"/>
</dbReference>
<dbReference type="Gene3D" id="1.10.238.10">
    <property type="entry name" value="EF-hand"/>
    <property type="match status" value="1"/>
</dbReference>
<dbReference type="InterPro" id="IPR011992">
    <property type="entry name" value="EF-hand-dom_pair"/>
</dbReference>
<dbReference type="InterPro" id="IPR018247">
    <property type="entry name" value="EF_Hand_1_Ca_BS"/>
</dbReference>
<dbReference type="InterPro" id="IPR002048">
    <property type="entry name" value="EF_hand_dom"/>
</dbReference>
<dbReference type="InterPro" id="IPR008080">
    <property type="entry name" value="Parvalbumin"/>
</dbReference>
<dbReference type="PANTHER" id="PTHR11653:SF12">
    <property type="entry name" value="PARVALBUMIN"/>
    <property type="match status" value="1"/>
</dbReference>
<dbReference type="PANTHER" id="PTHR11653">
    <property type="entry name" value="PARVALBUMIN ALPHA"/>
    <property type="match status" value="1"/>
</dbReference>
<dbReference type="Pfam" id="PF13499">
    <property type="entry name" value="EF-hand_7"/>
    <property type="match status" value="1"/>
</dbReference>
<dbReference type="PRINTS" id="PR01697">
    <property type="entry name" value="PARVALBUMIN"/>
</dbReference>
<dbReference type="SMART" id="SM00054">
    <property type="entry name" value="EFh"/>
    <property type="match status" value="2"/>
</dbReference>
<dbReference type="SUPFAM" id="SSF47473">
    <property type="entry name" value="EF-hand"/>
    <property type="match status" value="1"/>
</dbReference>
<dbReference type="PROSITE" id="PS00018">
    <property type="entry name" value="EF_HAND_1"/>
    <property type="match status" value="2"/>
</dbReference>
<dbReference type="PROSITE" id="PS50222">
    <property type="entry name" value="EF_HAND_2"/>
    <property type="match status" value="2"/>
</dbReference>
<sequence length="74" mass="8028">TFFKSNDDVKKAFFVIDQDKSGFIEEDELKLFLQNFSAGARALTAGETKTFLAAGDSDGDGMIGVDEFQALVKA</sequence>
<name>PRVB3_MACMG</name>
<proteinExistence type="evidence at protein level"/>
<evidence type="ECO:0000250" key="1">
    <source>
        <dbReference type="UniProtKB" id="P02621"/>
    </source>
</evidence>
<evidence type="ECO:0000250" key="2">
    <source>
        <dbReference type="UniProtKB" id="P02622"/>
    </source>
</evidence>
<evidence type="ECO:0000250" key="3">
    <source>
        <dbReference type="UniProtKB" id="P02624"/>
    </source>
</evidence>
<evidence type="ECO:0000255" key="4"/>
<evidence type="ECO:0000255" key="5">
    <source>
        <dbReference type="PROSITE-ProRule" id="PRU00448"/>
    </source>
</evidence>
<evidence type="ECO:0000269" key="6">
    <source>
    </source>
</evidence>
<evidence type="ECO:0000303" key="7">
    <source>
    </source>
</evidence>
<evidence type="ECO:0000305" key="8"/>
<feature type="chain" id="PRO_0000399401" description="Parvalbumin beta 3">
    <location>
        <begin position="1" status="less than"/>
        <end position="74" status="greater than"/>
    </location>
</feature>
<feature type="domain" description="EF-hand 1" evidence="5">
    <location>
        <begin position="4"/>
        <end position="39"/>
    </location>
</feature>
<feature type="domain" description="EF-hand 2" evidence="5">
    <location>
        <begin position="43"/>
        <end position="74" status="greater than"/>
    </location>
</feature>
<feature type="binding site" evidence="5">
    <location>
        <position position="17"/>
    </location>
    <ligand>
        <name>Ca(2+)</name>
        <dbReference type="ChEBI" id="CHEBI:29108"/>
        <label>1</label>
    </ligand>
</feature>
<feature type="binding site" evidence="5">
    <location>
        <position position="19"/>
    </location>
    <ligand>
        <name>Ca(2+)</name>
        <dbReference type="ChEBI" id="CHEBI:29108"/>
        <label>1</label>
    </ligand>
</feature>
<feature type="binding site" evidence="5">
    <location>
        <position position="21"/>
    </location>
    <ligand>
        <name>Ca(2+)</name>
        <dbReference type="ChEBI" id="CHEBI:29108"/>
        <label>1</label>
    </ligand>
</feature>
<feature type="binding site" evidence="1">
    <location>
        <position position="23"/>
    </location>
    <ligand>
        <name>Ca(2+)</name>
        <dbReference type="ChEBI" id="CHEBI:29108"/>
        <label>1</label>
    </ligand>
</feature>
<feature type="binding site" evidence="1">
    <location>
        <position position="25"/>
    </location>
    <ligand>
        <name>Ca(2+)</name>
        <dbReference type="ChEBI" id="CHEBI:29108"/>
        <label>1</label>
    </ligand>
</feature>
<feature type="binding site" evidence="5">
    <location>
        <position position="28"/>
    </location>
    <ligand>
        <name>Ca(2+)</name>
        <dbReference type="ChEBI" id="CHEBI:29108"/>
        <label>1</label>
    </ligand>
</feature>
<feature type="binding site" evidence="5">
    <location>
        <position position="56"/>
    </location>
    <ligand>
        <name>Ca(2+)</name>
        <dbReference type="ChEBI" id="CHEBI:29108"/>
        <label>2</label>
    </ligand>
</feature>
<feature type="binding site" evidence="5">
    <location>
        <position position="58"/>
    </location>
    <ligand>
        <name>Ca(2+)</name>
        <dbReference type="ChEBI" id="CHEBI:29108"/>
        <label>2</label>
    </ligand>
</feature>
<feature type="binding site" evidence="5">
    <location>
        <position position="60"/>
    </location>
    <ligand>
        <name>Ca(2+)</name>
        <dbReference type="ChEBI" id="CHEBI:29108"/>
        <label>2</label>
    </ligand>
</feature>
<feature type="binding site" evidence="5">
    <location>
        <position position="62"/>
    </location>
    <ligand>
        <name>Ca(2+)</name>
        <dbReference type="ChEBI" id="CHEBI:29108"/>
        <label>2</label>
    </ligand>
</feature>
<feature type="binding site" evidence="5">
    <location>
        <position position="67"/>
    </location>
    <ligand>
        <name>Ca(2+)</name>
        <dbReference type="ChEBI" id="CHEBI:29108"/>
        <label>2</label>
    </ligand>
</feature>
<feature type="unsure residue" description="K or Q" evidence="6">
    <location>
        <position position="4"/>
    </location>
</feature>
<feature type="unsure residue" description="K or Q" evidence="6">
    <location>
        <position position="10"/>
    </location>
</feature>
<feature type="unsure residue" description="K or Q" evidence="6">
    <location>
        <position position="11"/>
    </location>
</feature>
<feature type="unsure residue" description="I or L" evidence="6">
    <location>
        <position position="16"/>
    </location>
</feature>
<feature type="unsure residue" description="Q or K" evidence="6">
    <location>
        <position position="18"/>
    </location>
</feature>
<feature type="unsure residue" description="K or Q" evidence="6">
    <location>
        <position position="20"/>
    </location>
</feature>
<feature type="unsure residue" description="I or L" evidence="6">
    <location>
        <position position="24"/>
    </location>
</feature>
<feature type="unsure residue" description="L or I" evidence="6">
    <location>
        <position position="29"/>
    </location>
</feature>
<feature type="unsure residue" description="K or Q" evidence="6">
    <location>
        <position position="30"/>
    </location>
</feature>
<feature type="unsure residue" description="L or I" evidence="6">
    <location>
        <position position="31"/>
    </location>
</feature>
<feature type="unsure residue" description="L or I" evidence="6">
    <location>
        <position position="33"/>
    </location>
</feature>
<feature type="unsure residue" description="Q or K" evidence="6">
    <location>
        <position position="34"/>
    </location>
</feature>
<feature type="unsure residue" description="L or I" evidence="6">
    <location>
        <position position="43"/>
    </location>
</feature>
<feature type="unsure residue" description="K or Q" evidence="6">
    <location>
        <position position="49"/>
    </location>
</feature>
<feature type="unsure residue" description="L or I" evidence="6">
    <location>
        <position position="52"/>
    </location>
</feature>
<feature type="unsure residue" description="I or L" evidence="6">
    <location>
        <position position="63"/>
    </location>
</feature>
<feature type="unsure residue" description="Q or K" evidence="6">
    <location>
        <position position="69"/>
    </location>
</feature>
<feature type="unsure residue" description="L or I" evidence="6">
    <location>
        <position position="71"/>
    </location>
</feature>
<feature type="unsure residue" description="K or Q" evidence="6">
    <location>
        <position position="73"/>
    </location>
</feature>
<feature type="non-consecutive residues" evidence="7">
    <location>
        <begin position="4"/>
        <end position="5"/>
    </location>
</feature>
<feature type="non-terminal residue" evidence="7">
    <location>
        <position position="1"/>
    </location>
</feature>
<feature type="non-terminal residue" evidence="7">
    <location>
        <position position="74"/>
    </location>
</feature>
<accession>P86740</accession>